<keyword id="KW-0687">Ribonucleoprotein</keyword>
<keyword id="KW-0689">Ribosomal protein</keyword>
<evidence type="ECO:0000256" key="1">
    <source>
        <dbReference type="SAM" id="MobiDB-lite"/>
    </source>
</evidence>
<evidence type="ECO:0000305" key="2"/>
<name>RL15E_THEVO</name>
<reference key="1">
    <citation type="journal article" date="2000" name="Proc. Natl. Acad. Sci. U.S.A.">
        <title>Archaeal adaptation to higher temperatures revealed by genomic sequence of Thermoplasma volcanium.</title>
        <authorList>
            <person name="Kawashima T."/>
            <person name="Amano N."/>
            <person name="Koike H."/>
            <person name="Makino S."/>
            <person name="Higuchi S."/>
            <person name="Kawashima-Ohya Y."/>
            <person name="Watanabe K."/>
            <person name="Yamazaki M."/>
            <person name="Kanehori K."/>
            <person name="Kawamoto T."/>
            <person name="Nunoshiba T."/>
            <person name="Yamamoto Y."/>
            <person name="Aramaki H."/>
            <person name="Makino K."/>
            <person name="Suzuki M."/>
        </authorList>
    </citation>
    <scope>NUCLEOTIDE SEQUENCE [LARGE SCALE GENOMIC DNA]</scope>
    <source>
        <strain>ATCC 51530 / DSM 4299 / JCM 9571 / NBRC 15438 / GSS1</strain>
    </source>
</reference>
<gene>
    <name type="primary">rpl15e</name>
    <name type="ordered locus">TV0535</name>
    <name type="ORF">TVG0525551</name>
</gene>
<proteinExistence type="inferred from homology"/>
<protein>
    <recommendedName>
        <fullName evidence="2">Large ribosomal subunit protein eL15</fullName>
    </recommendedName>
    <alternativeName>
        <fullName>50S ribosomal protein L15e</fullName>
    </alternativeName>
</protein>
<accession>Q97BC1</accession>
<comment type="similarity">
    <text evidence="2">Belongs to the eukaryotic ribosomal protein eL15 family.</text>
</comment>
<organism>
    <name type="scientific">Thermoplasma volcanium (strain ATCC 51530 / DSM 4299 / JCM 9571 / NBRC 15438 / GSS1)</name>
    <dbReference type="NCBI Taxonomy" id="273116"/>
    <lineage>
        <taxon>Archaea</taxon>
        <taxon>Methanobacteriati</taxon>
        <taxon>Thermoplasmatota</taxon>
        <taxon>Thermoplasmata</taxon>
        <taxon>Thermoplasmatales</taxon>
        <taxon>Thermoplasmataceae</taxon>
        <taxon>Thermoplasma</taxon>
    </lineage>
</organism>
<feature type="chain" id="PRO_0000127589" description="Large ribosomal subunit protein eL15">
    <location>
        <begin position="1"/>
        <end position="197"/>
    </location>
</feature>
<feature type="region of interest" description="Disordered" evidence="1">
    <location>
        <begin position="175"/>
        <end position="197"/>
    </location>
</feature>
<dbReference type="EMBL" id="BA000011">
    <property type="protein sequence ID" value="BAB59677.1"/>
    <property type="molecule type" value="Genomic_DNA"/>
</dbReference>
<dbReference type="RefSeq" id="WP_010916793.1">
    <property type="nucleotide sequence ID" value="NC_002689.2"/>
</dbReference>
<dbReference type="SMR" id="Q97BC1"/>
<dbReference type="STRING" id="273116.gene:9381319"/>
<dbReference type="PaxDb" id="273116-14324750"/>
<dbReference type="GeneID" id="1441051"/>
<dbReference type="KEGG" id="tvo:TVG0525551"/>
<dbReference type="eggNOG" id="arCOG04209">
    <property type="taxonomic scope" value="Archaea"/>
</dbReference>
<dbReference type="HOGENOM" id="CLU_080796_1_0_2"/>
<dbReference type="OrthoDB" id="8183at2157"/>
<dbReference type="PhylomeDB" id="Q97BC1"/>
<dbReference type="Proteomes" id="UP000001017">
    <property type="component" value="Chromosome"/>
</dbReference>
<dbReference type="GO" id="GO:0022625">
    <property type="term" value="C:cytosolic large ribosomal subunit"/>
    <property type="evidence" value="ECO:0007669"/>
    <property type="project" value="TreeGrafter"/>
</dbReference>
<dbReference type="GO" id="GO:0003723">
    <property type="term" value="F:RNA binding"/>
    <property type="evidence" value="ECO:0007669"/>
    <property type="project" value="TreeGrafter"/>
</dbReference>
<dbReference type="GO" id="GO:0003735">
    <property type="term" value="F:structural constituent of ribosome"/>
    <property type="evidence" value="ECO:0007669"/>
    <property type="project" value="InterPro"/>
</dbReference>
<dbReference type="GO" id="GO:0002181">
    <property type="term" value="P:cytoplasmic translation"/>
    <property type="evidence" value="ECO:0007669"/>
    <property type="project" value="TreeGrafter"/>
</dbReference>
<dbReference type="FunFam" id="3.40.1120.10:FF:000002">
    <property type="entry name" value="50S ribosomal protein L15e"/>
    <property type="match status" value="1"/>
</dbReference>
<dbReference type="Gene3D" id="3.40.1120.10">
    <property type="entry name" value="Ribosomal protein l15e"/>
    <property type="match status" value="1"/>
</dbReference>
<dbReference type="HAMAP" id="MF_00256">
    <property type="entry name" value="Ribosomal_eL15"/>
    <property type="match status" value="1"/>
</dbReference>
<dbReference type="InterPro" id="IPR024794">
    <property type="entry name" value="Rbsml_eL15_core_dom_sf"/>
</dbReference>
<dbReference type="InterPro" id="IPR000439">
    <property type="entry name" value="Ribosomal_eL15"/>
</dbReference>
<dbReference type="InterPro" id="IPR020926">
    <property type="entry name" value="Ribosomal_eL15_arc"/>
</dbReference>
<dbReference type="InterPro" id="IPR020925">
    <property type="entry name" value="Ribosomal_eL15_CS"/>
</dbReference>
<dbReference type="InterPro" id="IPR012678">
    <property type="entry name" value="Ribosomal_uL23/eL15/eS24_sf"/>
</dbReference>
<dbReference type="NCBIfam" id="NF003269">
    <property type="entry name" value="PRK04243.1"/>
    <property type="match status" value="1"/>
</dbReference>
<dbReference type="PANTHER" id="PTHR11847:SF4">
    <property type="entry name" value="LARGE RIBOSOMAL SUBUNIT PROTEIN EL15"/>
    <property type="match status" value="1"/>
</dbReference>
<dbReference type="PANTHER" id="PTHR11847">
    <property type="entry name" value="RIBOSOMAL PROTEIN L15"/>
    <property type="match status" value="1"/>
</dbReference>
<dbReference type="Pfam" id="PF00827">
    <property type="entry name" value="Ribosomal_L15e"/>
    <property type="match status" value="1"/>
</dbReference>
<dbReference type="SMART" id="SM01384">
    <property type="entry name" value="Ribosomal_L15e"/>
    <property type="match status" value="1"/>
</dbReference>
<dbReference type="SUPFAM" id="SSF54189">
    <property type="entry name" value="Ribosomal proteins S24e, L23 and L15e"/>
    <property type="match status" value="1"/>
</dbReference>
<dbReference type="PROSITE" id="PS01194">
    <property type="entry name" value="RIBOSOMAL_L15E"/>
    <property type="match status" value="1"/>
</dbReference>
<sequence length="197" mass="22974">MSFTNLYQEIREEWKSLKKSEIYDVEKSRMIGWRHGPSVVRLDHPTRIDRARALGYKSKDGFIVVRSRVRRGGSNREKIMGGRRPRRLAYNKLTRKKSLKLIAEERAADKYPNLEVLNSYYVGEDGLYKYYEVILVDKSHPNIYNDPHISWISEPQNTGRVYRGLTSAGYKVRGLRTGRKGSSKSRPSIRANGRLRR</sequence>